<comment type="subcellular location">
    <subcellularLocation>
        <location evidence="3">Secreted</location>
    </subcellularLocation>
</comment>
<comment type="alternative products">
    <event type="alternative splicing"/>
    <isoform>
        <id>Q9C5N8-1</id>
        <name>1</name>
        <sequence type="displayed"/>
    </isoform>
    <isoform>
        <id>Q9C5N8-2</id>
        <name>2</name>
        <sequence type="described" ref="VSP_036692"/>
    </isoform>
</comment>
<comment type="miscellaneous">
    <molecule>Isoform 2</molecule>
    <text evidence="3">May be due to a competing acceptor splice site.</text>
</comment>
<comment type="similarity">
    <text evidence="3">Belongs to the 'GDSL' lipolytic enzyme family.</text>
</comment>
<comment type="sequence caution" evidence="3">
    <conflict type="erroneous gene model prediction">
        <sequence resource="EMBL-CDS" id="AAD25774"/>
    </conflict>
</comment>
<proteinExistence type="evidence at transcript level"/>
<sequence>MECSSVSVLGILLVFPLLHNLVTISGQNLPAVGLFTFGDSNFDAGNKKFLTSAPLPQNFWPYGKSRDDPKGKFSDGKIVPDFIAKFMGIPHDLPPALKPGTDVSRGASFAVGSASILGSPKDSLALNQQVRKFNQMISNWKVDYIQKSVFMISIGMEDYYNFTKNNPNAEVSAQQAFVTSVTNRFKSDINLLYSSGASKFVVHLLAPLGCLPIARQEFKTGNNCYEKLNDLAKQHNAKIGPILNEMAETKPDFQFTVFDFYNVILRRTQRNMNYRFSVTNISCCGVGTHYAYGCGLPNVHSKLCEYQRSYLYFDARHNTEKAQEAFAHLIFGADPNVIQPMNVRELMVYPVNEPMREFWEDPMDEKLSLVQY</sequence>
<accession>Q9C5N8</accession>
<accession>Q3ECQ5</accession>
<accession>Q9SYF8</accession>
<organism>
    <name type="scientific">Arabidopsis thaliana</name>
    <name type="common">Mouse-ear cress</name>
    <dbReference type="NCBI Taxonomy" id="3702"/>
    <lineage>
        <taxon>Eukaryota</taxon>
        <taxon>Viridiplantae</taxon>
        <taxon>Streptophyta</taxon>
        <taxon>Embryophyta</taxon>
        <taxon>Tracheophyta</taxon>
        <taxon>Spermatophyta</taxon>
        <taxon>Magnoliopsida</taxon>
        <taxon>eudicotyledons</taxon>
        <taxon>Gunneridae</taxon>
        <taxon>Pentapetalae</taxon>
        <taxon>rosids</taxon>
        <taxon>malvids</taxon>
        <taxon>Brassicales</taxon>
        <taxon>Brassicaceae</taxon>
        <taxon>Camelineae</taxon>
        <taxon>Arabidopsis</taxon>
    </lineage>
</organism>
<evidence type="ECO:0000250" key="1"/>
<evidence type="ECO:0000255" key="2"/>
<evidence type="ECO:0000305" key="3"/>
<gene>
    <name type="ordered locus">At1g54020</name>
    <name type="ORF">F15I1.10</name>
</gene>
<dbReference type="EC" id="3.1.1.-"/>
<dbReference type="EMBL" id="AC006577">
    <property type="protein sequence ID" value="AAD25774.1"/>
    <property type="status" value="ALT_SEQ"/>
    <property type="molecule type" value="Genomic_DNA"/>
</dbReference>
<dbReference type="EMBL" id="CP002684">
    <property type="protein sequence ID" value="AEE33035.1"/>
    <property type="molecule type" value="Genomic_DNA"/>
</dbReference>
<dbReference type="EMBL" id="CP002684">
    <property type="protein sequence ID" value="AEE33036.1"/>
    <property type="molecule type" value="Genomic_DNA"/>
</dbReference>
<dbReference type="EMBL" id="CP002684">
    <property type="protein sequence ID" value="AEE33037.1"/>
    <property type="molecule type" value="Genomic_DNA"/>
</dbReference>
<dbReference type="EMBL" id="CP002684">
    <property type="protein sequence ID" value="ANM58998.1"/>
    <property type="molecule type" value="Genomic_DNA"/>
</dbReference>
<dbReference type="EMBL" id="AF348585">
    <property type="protein sequence ID" value="AAK15556.1"/>
    <property type="molecule type" value="mRNA"/>
</dbReference>
<dbReference type="EMBL" id="AY054258">
    <property type="protein sequence ID" value="AAL06917.1"/>
    <property type="molecule type" value="mRNA"/>
</dbReference>
<dbReference type="EMBL" id="AY132004">
    <property type="protein sequence ID" value="AAM91037.1"/>
    <property type="molecule type" value="mRNA"/>
</dbReference>
<dbReference type="PIR" id="G96580">
    <property type="entry name" value="G96580"/>
</dbReference>
<dbReference type="RefSeq" id="NP_001077719.1">
    <molecule id="Q9C5N8-2"/>
    <property type="nucleotide sequence ID" value="NM_001084250.1"/>
</dbReference>
<dbReference type="RefSeq" id="NP_001319222.1">
    <molecule id="Q9C5N8-2"/>
    <property type="nucleotide sequence ID" value="NM_001333625.1"/>
</dbReference>
<dbReference type="RefSeq" id="NP_175804.1">
    <molecule id="Q9C5N8-1"/>
    <property type="nucleotide sequence ID" value="NM_104279.4"/>
</dbReference>
<dbReference type="RefSeq" id="NP_849805.1">
    <molecule id="Q9C5N8-2"/>
    <property type="nucleotide sequence ID" value="NM_179474.1"/>
</dbReference>
<dbReference type="SMR" id="Q9C5N8"/>
<dbReference type="BioGRID" id="27065">
    <property type="interactions" value="1"/>
</dbReference>
<dbReference type="FunCoup" id="Q9C5N8">
    <property type="interactions" value="17"/>
</dbReference>
<dbReference type="STRING" id="3702.Q9C5N8"/>
<dbReference type="GlyGen" id="Q9C5N8">
    <property type="glycosylation" value="2 sites"/>
</dbReference>
<dbReference type="PaxDb" id="3702-AT1G54020.2"/>
<dbReference type="ProteomicsDB" id="221968">
    <molecule id="Q9C5N8-1"/>
</dbReference>
<dbReference type="EnsemblPlants" id="AT1G54020.1">
    <molecule id="Q9C5N8-2"/>
    <property type="protein sequence ID" value="AT1G54020.1"/>
    <property type="gene ID" value="AT1G54020"/>
</dbReference>
<dbReference type="EnsemblPlants" id="AT1G54020.2">
    <molecule id="Q9C5N8-1"/>
    <property type="protein sequence ID" value="AT1G54020.2"/>
    <property type="gene ID" value="AT1G54020"/>
</dbReference>
<dbReference type="EnsemblPlants" id="AT1G54020.3">
    <molecule id="Q9C5N8-2"/>
    <property type="protein sequence ID" value="AT1G54020.3"/>
    <property type="gene ID" value="AT1G54020"/>
</dbReference>
<dbReference type="EnsemblPlants" id="AT1G54020.5">
    <molecule id="Q9C5N8-2"/>
    <property type="protein sequence ID" value="AT1G54020.5"/>
    <property type="gene ID" value="AT1G54020"/>
</dbReference>
<dbReference type="GeneID" id="841840"/>
<dbReference type="Gramene" id="AT1G54020.1">
    <molecule id="Q9C5N8-2"/>
    <property type="protein sequence ID" value="AT1G54020.1"/>
    <property type="gene ID" value="AT1G54020"/>
</dbReference>
<dbReference type="Gramene" id="AT1G54020.2">
    <molecule id="Q9C5N8-1"/>
    <property type="protein sequence ID" value="AT1G54020.2"/>
    <property type="gene ID" value="AT1G54020"/>
</dbReference>
<dbReference type="Gramene" id="AT1G54020.3">
    <molecule id="Q9C5N8-2"/>
    <property type="protein sequence ID" value="AT1G54020.3"/>
    <property type="gene ID" value="AT1G54020"/>
</dbReference>
<dbReference type="Gramene" id="AT1G54020.5">
    <molecule id="Q9C5N8-2"/>
    <property type="protein sequence ID" value="AT1G54020.5"/>
    <property type="gene ID" value="AT1G54020"/>
</dbReference>
<dbReference type="KEGG" id="ath:AT1G54020"/>
<dbReference type="Araport" id="AT1G54020"/>
<dbReference type="TAIR" id="AT1G54020"/>
<dbReference type="eggNOG" id="ENOG502S4IX">
    <property type="taxonomic scope" value="Eukaryota"/>
</dbReference>
<dbReference type="InParanoid" id="Q9C5N8"/>
<dbReference type="OMA" id="FWEDPME"/>
<dbReference type="PhylomeDB" id="Q9C5N8"/>
<dbReference type="PRO" id="PR:Q9C5N8"/>
<dbReference type="Proteomes" id="UP000006548">
    <property type="component" value="Chromosome 1"/>
</dbReference>
<dbReference type="ExpressionAtlas" id="Q9C5N8">
    <property type="expression patterns" value="baseline and differential"/>
</dbReference>
<dbReference type="GO" id="GO:0005829">
    <property type="term" value="C:cytosol"/>
    <property type="evidence" value="ECO:0007005"/>
    <property type="project" value="TAIR"/>
</dbReference>
<dbReference type="GO" id="GO:0005576">
    <property type="term" value="C:extracellular region"/>
    <property type="evidence" value="ECO:0007669"/>
    <property type="project" value="UniProtKB-SubCell"/>
</dbReference>
<dbReference type="GO" id="GO:0000325">
    <property type="term" value="C:plant-type vacuole"/>
    <property type="evidence" value="ECO:0007005"/>
    <property type="project" value="TAIR"/>
</dbReference>
<dbReference type="GO" id="GO:0005773">
    <property type="term" value="C:vacuole"/>
    <property type="evidence" value="ECO:0007005"/>
    <property type="project" value="TAIR"/>
</dbReference>
<dbReference type="GO" id="GO:0016788">
    <property type="term" value="F:hydrolase activity, acting on ester bonds"/>
    <property type="evidence" value="ECO:0007669"/>
    <property type="project" value="InterPro"/>
</dbReference>
<dbReference type="GO" id="GO:0016042">
    <property type="term" value="P:lipid catabolic process"/>
    <property type="evidence" value="ECO:0007669"/>
    <property type="project" value="UniProtKB-KW"/>
</dbReference>
<dbReference type="CDD" id="cd01837">
    <property type="entry name" value="SGNH_plant_lipase_like"/>
    <property type="match status" value="1"/>
</dbReference>
<dbReference type="FunFam" id="3.40.50.1110:FF:000026">
    <property type="entry name" value="GDSL esterase/lipase At3g14220"/>
    <property type="match status" value="1"/>
</dbReference>
<dbReference type="Gene3D" id="3.40.50.1110">
    <property type="entry name" value="SGNH hydrolase"/>
    <property type="match status" value="1"/>
</dbReference>
<dbReference type="InterPro" id="IPR001087">
    <property type="entry name" value="GDSL"/>
</dbReference>
<dbReference type="InterPro" id="IPR044552">
    <property type="entry name" value="GLIP1-5/GLL25"/>
</dbReference>
<dbReference type="InterPro" id="IPR036514">
    <property type="entry name" value="SGNH_hydro_sf"/>
</dbReference>
<dbReference type="InterPro" id="IPR035669">
    <property type="entry name" value="SGNH_plant_lipase-like"/>
</dbReference>
<dbReference type="PANTHER" id="PTHR45966">
    <property type="entry name" value="GDSL-LIKE LIPASE/ACYLHYDROLASE"/>
    <property type="match status" value="1"/>
</dbReference>
<dbReference type="PANTHER" id="PTHR45966:SF36">
    <property type="entry name" value="INACTIVE GDSL ESTERASE_LIPASE-LIKE PROTEIN 25"/>
    <property type="match status" value="1"/>
</dbReference>
<dbReference type="Pfam" id="PF00657">
    <property type="entry name" value="Lipase_GDSL"/>
    <property type="match status" value="1"/>
</dbReference>
<keyword id="KW-0025">Alternative splicing</keyword>
<keyword id="KW-0325">Glycoprotein</keyword>
<keyword id="KW-0378">Hydrolase</keyword>
<keyword id="KW-0442">Lipid degradation</keyword>
<keyword id="KW-0443">Lipid metabolism</keyword>
<keyword id="KW-1185">Reference proteome</keyword>
<keyword id="KW-0964">Secreted</keyword>
<keyword id="KW-0732">Signal</keyword>
<reference key="1">
    <citation type="journal article" date="2000" name="Nature">
        <title>Sequence and analysis of chromosome 1 of the plant Arabidopsis thaliana.</title>
        <authorList>
            <person name="Theologis A."/>
            <person name="Ecker J.R."/>
            <person name="Palm C.J."/>
            <person name="Federspiel N.A."/>
            <person name="Kaul S."/>
            <person name="White O."/>
            <person name="Alonso J."/>
            <person name="Altafi H."/>
            <person name="Araujo R."/>
            <person name="Bowman C.L."/>
            <person name="Brooks S.Y."/>
            <person name="Buehler E."/>
            <person name="Chan A."/>
            <person name="Chao Q."/>
            <person name="Chen H."/>
            <person name="Cheuk R.F."/>
            <person name="Chin C.W."/>
            <person name="Chung M.K."/>
            <person name="Conn L."/>
            <person name="Conway A.B."/>
            <person name="Conway A.R."/>
            <person name="Creasy T.H."/>
            <person name="Dewar K."/>
            <person name="Dunn P."/>
            <person name="Etgu P."/>
            <person name="Feldblyum T.V."/>
            <person name="Feng J.-D."/>
            <person name="Fong B."/>
            <person name="Fujii C.Y."/>
            <person name="Gill J.E."/>
            <person name="Goldsmith A.D."/>
            <person name="Haas B."/>
            <person name="Hansen N.F."/>
            <person name="Hughes B."/>
            <person name="Huizar L."/>
            <person name="Hunter J.L."/>
            <person name="Jenkins J."/>
            <person name="Johnson-Hopson C."/>
            <person name="Khan S."/>
            <person name="Khaykin E."/>
            <person name="Kim C.J."/>
            <person name="Koo H.L."/>
            <person name="Kremenetskaia I."/>
            <person name="Kurtz D.B."/>
            <person name="Kwan A."/>
            <person name="Lam B."/>
            <person name="Langin-Hooper S."/>
            <person name="Lee A."/>
            <person name="Lee J.M."/>
            <person name="Lenz C.A."/>
            <person name="Li J.H."/>
            <person name="Li Y.-P."/>
            <person name="Lin X."/>
            <person name="Liu S.X."/>
            <person name="Liu Z.A."/>
            <person name="Luros J.S."/>
            <person name="Maiti R."/>
            <person name="Marziali A."/>
            <person name="Militscher J."/>
            <person name="Miranda M."/>
            <person name="Nguyen M."/>
            <person name="Nierman W.C."/>
            <person name="Osborne B.I."/>
            <person name="Pai G."/>
            <person name="Peterson J."/>
            <person name="Pham P.K."/>
            <person name="Rizzo M."/>
            <person name="Rooney T."/>
            <person name="Rowley D."/>
            <person name="Sakano H."/>
            <person name="Salzberg S.L."/>
            <person name="Schwartz J.R."/>
            <person name="Shinn P."/>
            <person name="Southwick A.M."/>
            <person name="Sun H."/>
            <person name="Tallon L.J."/>
            <person name="Tambunga G."/>
            <person name="Toriumi M.J."/>
            <person name="Town C.D."/>
            <person name="Utterback T."/>
            <person name="Van Aken S."/>
            <person name="Vaysberg M."/>
            <person name="Vysotskaia V.S."/>
            <person name="Walker M."/>
            <person name="Wu D."/>
            <person name="Yu G."/>
            <person name="Fraser C.M."/>
            <person name="Venter J.C."/>
            <person name="Davis R.W."/>
        </authorList>
    </citation>
    <scope>NUCLEOTIDE SEQUENCE [LARGE SCALE GENOMIC DNA]</scope>
    <source>
        <strain>cv. Columbia</strain>
    </source>
</reference>
<reference key="2">
    <citation type="journal article" date="2017" name="Plant J.">
        <title>Araport11: a complete reannotation of the Arabidopsis thaliana reference genome.</title>
        <authorList>
            <person name="Cheng C.Y."/>
            <person name="Krishnakumar V."/>
            <person name="Chan A.P."/>
            <person name="Thibaud-Nissen F."/>
            <person name="Schobel S."/>
            <person name="Town C.D."/>
        </authorList>
    </citation>
    <scope>GENOME REANNOTATION</scope>
    <source>
        <strain>cv. Columbia</strain>
    </source>
</reference>
<reference key="3">
    <citation type="journal article" date="2003" name="Science">
        <title>Empirical analysis of transcriptional activity in the Arabidopsis genome.</title>
        <authorList>
            <person name="Yamada K."/>
            <person name="Lim J."/>
            <person name="Dale J.M."/>
            <person name="Chen H."/>
            <person name="Shinn P."/>
            <person name="Palm C.J."/>
            <person name="Southwick A.M."/>
            <person name="Wu H.C."/>
            <person name="Kim C.J."/>
            <person name="Nguyen M."/>
            <person name="Pham P.K."/>
            <person name="Cheuk R.F."/>
            <person name="Karlin-Newmann G."/>
            <person name="Liu S.X."/>
            <person name="Lam B."/>
            <person name="Sakano H."/>
            <person name="Wu T."/>
            <person name="Yu G."/>
            <person name="Miranda M."/>
            <person name="Quach H.L."/>
            <person name="Tripp M."/>
            <person name="Chang C.H."/>
            <person name="Lee J.M."/>
            <person name="Toriumi M.J."/>
            <person name="Chan M.M."/>
            <person name="Tang C.C."/>
            <person name="Onodera C.S."/>
            <person name="Deng J.M."/>
            <person name="Akiyama K."/>
            <person name="Ansari Y."/>
            <person name="Arakawa T."/>
            <person name="Banh J."/>
            <person name="Banno F."/>
            <person name="Bowser L."/>
            <person name="Brooks S.Y."/>
            <person name="Carninci P."/>
            <person name="Chao Q."/>
            <person name="Choy N."/>
            <person name="Enju A."/>
            <person name="Goldsmith A.D."/>
            <person name="Gurjal M."/>
            <person name="Hansen N.F."/>
            <person name="Hayashizaki Y."/>
            <person name="Johnson-Hopson C."/>
            <person name="Hsuan V.W."/>
            <person name="Iida K."/>
            <person name="Karnes M."/>
            <person name="Khan S."/>
            <person name="Koesema E."/>
            <person name="Ishida J."/>
            <person name="Jiang P.X."/>
            <person name="Jones T."/>
            <person name="Kawai J."/>
            <person name="Kamiya A."/>
            <person name="Meyers C."/>
            <person name="Nakajima M."/>
            <person name="Narusaka M."/>
            <person name="Seki M."/>
            <person name="Sakurai T."/>
            <person name="Satou M."/>
            <person name="Tamse R."/>
            <person name="Vaysberg M."/>
            <person name="Wallender E.K."/>
            <person name="Wong C."/>
            <person name="Yamamura Y."/>
            <person name="Yuan S."/>
            <person name="Shinozaki K."/>
            <person name="Davis R.W."/>
            <person name="Theologis A."/>
            <person name="Ecker J.R."/>
        </authorList>
    </citation>
    <scope>NUCLEOTIDE SEQUENCE [LARGE SCALE MRNA] (ISOFORM 1)</scope>
    <source>
        <strain>cv. Columbia</strain>
    </source>
</reference>
<reference key="4">
    <citation type="journal article" date="2004" name="Prog. Lipid Res.">
        <title>GDSL family of serine esterases/lipases.</title>
        <authorList>
            <person name="Akoh C.C."/>
            <person name="Lee G.-C."/>
            <person name="Liaw Y.-C."/>
            <person name="Huang T.-H."/>
            <person name="Shaw J.-F."/>
        </authorList>
    </citation>
    <scope>REVIEW</scope>
</reference>
<reference key="5">
    <citation type="journal article" date="2008" name="Pak. J. Biol. Sci.">
        <title>Sequence analysis of GDSL lipase gene family in Arabidopsis thaliana.</title>
        <authorList>
            <person name="Ling H."/>
        </authorList>
    </citation>
    <scope>GENE FAMILY</scope>
</reference>
<protein>
    <recommendedName>
        <fullName>GDSL esterase/lipase At1g54020</fullName>
        <ecNumber>3.1.1.-</ecNumber>
    </recommendedName>
    <alternativeName>
        <fullName>Extracellular lipase At1g54020</fullName>
    </alternativeName>
</protein>
<feature type="signal peptide" evidence="2">
    <location>
        <begin position="1"/>
        <end position="26"/>
    </location>
</feature>
<feature type="chain" id="PRO_0000367362" description="GDSL esterase/lipase At1g54020">
    <location>
        <begin position="27"/>
        <end position="372"/>
    </location>
</feature>
<feature type="active site" description="Nucleophile" evidence="1">
    <location>
        <position position="40"/>
    </location>
</feature>
<feature type="active site" evidence="1">
    <location>
        <position position="314"/>
    </location>
</feature>
<feature type="active site" evidence="1">
    <location>
        <position position="317"/>
    </location>
</feature>
<feature type="glycosylation site" description="N-linked (GlcNAc...) asparagine" evidence="2">
    <location>
        <position position="161"/>
    </location>
</feature>
<feature type="glycosylation site" description="N-linked (GlcNAc...) asparagine" evidence="2">
    <location>
        <position position="280"/>
    </location>
</feature>
<feature type="splice variant" id="VSP_036692" description="In isoform 2." evidence="3">
    <location>
        <begin position="1"/>
        <end position="86"/>
    </location>
</feature>
<name>GDL20_ARATH</name>